<proteinExistence type="inferred from homology"/>
<protein>
    <recommendedName>
        <fullName evidence="1">Endonuclease NucS 2</fullName>
        <ecNumber evidence="1">3.1.-.-</ecNumber>
    </recommendedName>
</protein>
<feature type="chain" id="PRO_0000155690" description="Endonuclease NucS 2">
    <location>
        <begin position="1"/>
        <end position="250"/>
    </location>
</feature>
<sequence>MTVERVSAPTPAAFVDAANAAFRNGAVLSVQARCEVEYNGRTSGYLGDGDRLLVAKPDGTFLVHQPTGHKPVNWMPGGGTVEARTSQGDAVLLARRSNPTERVETRLHEVYGVTRFDAEDGATYEESGTEAEMHEYIEANPDALEAGLRIVEHERETKYGFIDFYAVDGDGTPVVIEVKRIQATLNHFDQLKRYVDRYAETNDDVRGMLVAPSASERVTRALRDNGLEFVALAEFGLDAKGATEAKLTDF</sequence>
<gene>
    <name evidence="1" type="primary">nucS2</name>
    <name type="ordered locus">VNG_1986C</name>
</gene>
<comment type="function">
    <text evidence="1">Cleaves both 3' and 5' ssDNA extremities of branched DNA structures.</text>
</comment>
<comment type="subcellular location">
    <subcellularLocation>
        <location evidence="1">Cytoplasm</location>
    </subcellularLocation>
</comment>
<comment type="similarity">
    <text evidence="1">Belongs to the NucS endonuclease family.</text>
</comment>
<evidence type="ECO:0000255" key="1">
    <source>
        <dbReference type="HAMAP-Rule" id="MF_00722"/>
    </source>
</evidence>
<accession>Q9HNR1</accession>
<reference key="1">
    <citation type="journal article" date="2000" name="Proc. Natl. Acad. Sci. U.S.A.">
        <title>Genome sequence of Halobacterium species NRC-1.</title>
        <authorList>
            <person name="Ng W.V."/>
            <person name="Kennedy S.P."/>
            <person name="Mahairas G.G."/>
            <person name="Berquist B."/>
            <person name="Pan M."/>
            <person name="Shukla H.D."/>
            <person name="Lasky S.R."/>
            <person name="Baliga N.S."/>
            <person name="Thorsson V."/>
            <person name="Sbrogna J."/>
            <person name="Swartzell S."/>
            <person name="Weir D."/>
            <person name="Hall J."/>
            <person name="Dahl T.A."/>
            <person name="Welti R."/>
            <person name="Goo Y.A."/>
            <person name="Leithauser B."/>
            <person name="Keller K."/>
            <person name="Cruz R."/>
            <person name="Danson M.J."/>
            <person name="Hough D.W."/>
            <person name="Maddocks D.G."/>
            <person name="Jablonski P.E."/>
            <person name="Krebs M.P."/>
            <person name="Angevine C.M."/>
            <person name="Dale H."/>
            <person name="Isenbarger T.A."/>
            <person name="Peck R.F."/>
            <person name="Pohlschroder M."/>
            <person name="Spudich J.L."/>
            <person name="Jung K.-H."/>
            <person name="Alam M."/>
            <person name="Freitas T."/>
            <person name="Hou S."/>
            <person name="Daniels C.J."/>
            <person name="Dennis P.P."/>
            <person name="Omer A.D."/>
            <person name="Ebhardt H."/>
            <person name="Lowe T.M."/>
            <person name="Liang P."/>
            <person name="Riley M."/>
            <person name="Hood L."/>
            <person name="DasSarma S."/>
        </authorList>
    </citation>
    <scope>NUCLEOTIDE SEQUENCE [LARGE SCALE GENOMIC DNA]</scope>
    <source>
        <strain>ATCC 700922 / JCM 11081 / NRC-1</strain>
    </source>
</reference>
<name>NUCS2_HALSA</name>
<organism>
    <name type="scientific">Halobacterium salinarum (strain ATCC 700922 / JCM 11081 / NRC-1)</name>
    <name type="common">Halobacterium halobium</name>
    <dbReference type="NCBI Taxonomy" id="64091"/>
    <lineage>
        <taxon>Archaea</taxon>
        <taxon>Methanobacteriati</taxon>
        <taxon>Methanobacteriota</taxon>
        <taxon>Stenosarchaea group</taxon>
        <taxon>Halobacteria</taxon>
        <taxon>Halobacteriales</taxon>
        <taxon>Halobacteriaceae</taxon>
        <taxon>Halobacterium</taxon>
        <taxon>Halobacterium salinarum NRC-34001</taxon>
    </lineage>
</organism>
<dbReference type="EC" id="3.1.-.-" evidence="1"/>
<dbReference type="EMBL" id="AE004437">
    <property type="protein sequence ID" value="AAG20159.1"/>
    <property type="molecule type" value="Genomic_DNA"/>
</dbReference>
<dbReference type="PIR" id="C84349">
    <property type="entry name" value="C84349"/>
</dbReference>
<dbReference type="SMR" id="Q9HNR1"/>
<dbReference type="STRING" id="64091.VNG_1986C"/>
<dbReference type="PaxDb" id="64091-VNG_1986C"/>
<dbReference type="KEGG" id="hal:VNG_1986C"/>
<dbReference type="PATRIC" id="fig|64091.14.peg.1516"/>
<dbReference type="HOGENOM" id="CLU_069350_1_0_2"/>
<dbReference type="InParanoid" id="Q9HNR1"/>
<dbReference type="OrthoDB" id="15177at2157"/>
<dbReference type="PhylomeDB" id="Q9HNR1"/>
<dbReference type="Proteomes" id="UP000000554">
    <property type="component" value="Chromosome"/>
</dbReference>
<dbReference type="GO" id="GO:0005737">
    <property type="term" value="C:cytoplasm"/>
    <property type="evidence" value="ECO:0007669"/>
    <property type="project" value="UniProtKB-SubCell"/>
</dbReference>
<dbReference type="GO" id="GO:0003677">
    <property type="term" value="F:DNA binding"/>
    <property type="evidence" value="ECO:0007669"/>
    <property type="project" value="UniProtKB-KW"/>
</dbReference>
<dbReference type="GO" id="GO:0000014">
    <property type="term" value="F:single-stranded DNA endodeoxyribonuclease activity"/>
    <property type="evidence" value="ECO:0007669"/>
    <property type="project" value="UniProtKB-UniRule"/>
</dbReference>
<dbReference type="CDD" id="cd22341">
    <property type="entry name" value="NucS-like"/>
    <property type="match status" value="1"/>
</dbReference>
<dbReference type="Gene3D" id="2.70.180.20">
    <property type="match status" value="1"/>
</dbReference>
<dbReference type="Gene3D" id="3.40.1350.10">
    <property type="match status" value="1"/>
</dbReference>
<dbReference type="HAMAP" id="MF_00722">
    <property type="entry name" value="NucS"/>
    <property type="match status" value="1"/>
</dbReference>
<dbReference type="InterPro" id="IPR002793">
    <property type="entry name" value="Endonuclease_NucS"/>
</dbReference>
<dbReference type="InterPro" id="IPR048301">
    <property type="entry name" value="NucS_C"/>
</dbReference>
<dbReference type="InterPro" id="IPR048302">
    <property type="entry name" value="NucS_N"/>
</dbReference>
<dbReference type="InterPro" id="IPR049173">
    <property type="entry name" value="NucS_N_sf"/>
</dbReference>
<dbReference type="InterPro" id="IPR011856">
    <property type="entry name" value="tRNA_endonuc-like_dom_sf"/>
</dbReference>
<dbReference type="NCBIfam" id="NF003270">
    <property type="entry name" value="PRK04247.1"/>
    <property type="match status" value="1"/>
</dbReference>
<dbReference type="PANTHER" id="PTHR38814">
    <property type="entry name" value="ENDONUCLEASE NUCS"/>
    <property type="match status" value="1"/>
</dbReference>
<dbReference type="PANTHER" id="PTHR38814:SF1">
    <property type="entry name" value="ENDONUCLEASE NUCS"/>
    <property type="match status" value="1"/>
</dbReference>
<dbReference type="Pfam" id="PF01939">
    <property type="entry name" value="NucS_C"/>
    <property type="match status" value="1"/>
</dbReference>
<dbReference type="Pfam" id="PF21003">
    <property type="entry name" value="NucS_N"/>
    <property type="match status" value="1"/>
</dbReference>
<keyword id="KW-0963">Cytoplasm</keyword>
<keyword id="KW-0238">DNA-binding</keyword>
<keyword id="KW-0255">Endonuclease</keyword>
<keyword id="KW-0378">Hydrolase</keyword>
<keyword id="KW-0540">Nuclease</keyword>
<keyword id="KW-1185">Reference proteome</keyword>